<sequence length="704" mass="77326">MLKDLNKVRNIGIMAHIDAGKTTTTERILFYTGINRKVGETHDGASTTDWMEQEKERGITITSAAVTCFWNGNQVNIIDTPGHVDFTVEVERSLRVLDGAVAVFDGKEGVEPQSEQVWRQAAKYDVPRICFVNKMDKLGADFYFTVQTIIDRLGAKPLVMQLPIGAEDDFDGVVDLLEMKAITWRGKVETGAEPVIEEIPADLADKAAEYREKLVETVAESDEALMEKYFGGEELTIEELKAGIRKLTVNSEVYPVLCGTAYRNKGVQPLLDAVIDYLPTPLDIGEVHGHKVGDETVDLVRKPSVDEPFSALAFKIAAHPFFGKLTFVRVYSGIVEPGAQVANSTKGKNERIGKLFQMHANKENPVDEARAGNIYAFIGLKDTTTGDTLCDKNDQIILESMDFPDPVIKVSIEPKTKSDQEKLGTAIQKLSEEDPTFTVELDEESGQTVIGGMGELHLDVLVDRMKREFKVEANVGNPQVAYRETIRKPVEKLEYTHKKQTGGSGQFAKVIIGIEPYAPEAETLEEGESATYKFENAVTGGRVPKEYIPSVDAGIQDAMQYGYLAGFPLVNIKATLIDGAYHEVDSSEMAFKLAGSQALKEAVAKAKPVLLEPLMAVEVITPEEYMGDVIGDINSRRGQVSAMDDRAGAKVVKAKVPLSEMFGYVGDLRSRTQGRANYTMIFDSYAEVPTNVAAEIVAERNGTA</sequence>
<evidence type="ECO:0000255" key="1">
    <source>
        <dbReference type="HAMAP-Rule" id="MF_00054"/>
    </source>
</evidence>
<evidence type="ECO:0000305" key="2"/>
<feature type="chain" id="PRO_0000091111" description="Elongation factor G">
    <location>
        <begin position="1"/>
        <end position="704"/>
    </location>
</feature>
<feature type="domain" description="tr-type G">
    <location>
        <begin position="6"/>
        <end position="282"/>
    </location>
</feature>
<feature type="binding site" evidence="1">
    <location>
        <begin position="15"/>
        <end position="22"/>
    </location>
    <ligand>
        <name>GTP</name>
        <dbReference type="ChEBI" id="CHEBI:37565"/>
    </ligand>
</feature>
<feature type="binding site" evidence="1">
    <location>
        <begin position="79"/>
        <end position="83"/>
    </location>
    <ligand>
        <name>GTP</name>
        <dbReference type="ChEBI" id="CHEBI:37565"/>
    </ligand>
</feature>
<feature type="binding site" evidence="1">
    <location>
        <begin position="133"/>
        <end position="136"/>
    </location>
    <ligand>
        <name>GTP</name>
        <dbReference type="ChEBI" id="CHEBI:37565"/>
    </ligand>
</feature>
<proteinExistence type="inferred from homology"/>
<dbReference type="EMBL" id="BX248355">
    <property type="protein sequence ID" value="CAE48973.1"/>
    <property type="status" value="ALT_INIT"/>
    <property type="molecule type" value="Genomic_DNA"/>
</dbReference>
<dbReference type="SMR" id="Q6NJD6"/>
<dbReference type="STRING" id="257309.DIP0469"/>
<dbReference type="KEGG" id="cdi:DIP0469"/>
<dbReference type="HOGENOM" id="CLU_002794_4_1_11"/>
<dbReference type="Proteomes" id="UP000002198">
    <property type="component" value="Chromosome"/>
</dbReference>
<dbReference type="GO" id="GO:0005737">
    <property type="term" value="C:cytoplasm"/>
    <property type="evidence" value="ECO:0007669"/>
    <property type="project" value="UniProtKB-SubCell"/>
</dbReference>
<dbReference type="GO" id="GO:0005525">
    <property type="term" value="F:GTP binding"/>
    <property type="evidence" value="ECO:0007669"/>
    <property type="project" value="UniProtKB-UniRule"/>
</dbReference>
<dbReference type="GO" id="GO:0003924">
    <property type="term" value="F:GTPase activity"/>
    <property type="evidence" value="ECO:0007669"/>
    <property type="project" value="InterPro"/>
</dbReference>
<dbReference type="GO" id="GO:0003746">
    <property type="term" value="F:translation elongation factor activity"/>
    <property type="evidence" value="ECO:0007669"/>
    <property type="project" value="UniProtKB-UniRule"/>
</dbReference>
<dbReference type="GO" id="GO:0032790">
    <property type="term" value="P:ribosome disassembly"/>
    <property type="evidence" value="ECO:0007669"/>
    <property type="project" value="TreeGrafter"/>
</dbReference>
<dbReference type="CDD" id="cd01886">
    <property type="entry name" value="EF-G"/>
    <property type="match status" value="1"/>
</dbReference>
<dbReference type="CDD" id="cd16262">
    <property type="entry name" value="EFG_III"/>
    <property type="match status" value="1"/>
</dbReference>
<dbReference type="CDD" id="cd01434">
    <property type="entry name" value="EFG_mtEFG1_IV"/>
    <property type="match status" value="1"/>
</dbReference>
<dbReference type="CDD" id="cd03713">
    <property type="entry name" value="EFG_mtEFG_C"/>
    <property type="match status" value="1"/>
</dbReference>
<dbReference type="CDD" id="cd04088">
    <property type="entry name" value="EFG_mtEFG_II"/>
    <property type="match status" value="1"/>
</dbReference>
<dbReference type="FunFam" id="2.40.30.10:FF:000006">
    <property type="entry name" value="Elongation factor G"/>
    <property type="match status" value="1"/>
</dbReference>
<dbReference type="FunFam" id="3.30.230.10:FF:000003">
    <property type="entry name" value="Elongation factor G"/>
    <property type="match status" value="1"/>
</dbReference>
<dbReference type="FunFam" id="3.30.70.240:FF:000001">
    <property type="entry name" value="Elongation factor G"/>
    <property type="match status" value="1"/>
</dbReference>
<dbReference type="FunFam" id="3.30.70.870:FF:000001">
    <property type="entry name" value="Elongation factor G"/>
    <property type="match status" value="1"/>
</dbReference>
<dbReference type="FunFam" id="3.40.50.300:FF:000029">
    <property type="entry name" value="Elongation factor G"/>
    <property type="match status" value="1"/>
</dbReference>
<dbReference type="Gene3D" id="3.30.230.10">
    <property type="match status" value="1"/>
</dbReference>
<dbReference type="Gene3D" id="3.30.70.240">
    <property type="match status" value="1"/>
</dbReference>
<dbReference type="Gene3D" id="3.30.70.870">
    <property type="entry name" value="Elongation Factor G (Translational Gtpase), domain 3"/>
    <property type="match status" value="1"/>
</dbReference>
<dbReference type="Gene3D" id="3.40.50.300">
    <property type="entry name" value="P-loop containing nucleotide triphosphate hydrolases"/>
    <property type="match status" value="1"/>
</dbReference>
<dbReference type="Gene3D" id="2.40.30.10">
    <property type="entry name" value="Translation factors"/>
    <property type="match status" value="1"/>
</dbReference>
<dbReference type="HAMAP" id="MF_00054_B">
    <property type="entry name" value="EF_G_EF_2_B"/>
    <property type="match status" value="1"/>
</dbReference>
<dbReference type="InterPro" id="IPR041095">
    <property type="entry name" value="EFG_II"/>
</dbReference>
<dbReference type="InterPro" id="IPR009022">
    <property type="entry name" value="EFG_III"/>
</dbReference>
<dbReference type="InterPro" id="IPR035647">
    <property type="entry name" value="EFG_III/V"/>
</dbReference>
<dbReference type="InterPro" id="IPR047872">
    <property type="entry name" value="EFG_IV"/>
</dbReference>
<dbReference type="InterPro" id="IPR035649">
    <property type="entry name" value="EFG_V"/>
</dbReference>
<dbReference type="InterPro" id="IPR000640">
    <property type="entry name" value="EFG_V-like"/>
</dbReference>
<dbReference type="InterPro" id="IPR004161">
    <property type="entry name" value="EFTu-like_2"/>
</dbReference>
<dbReference type="InterPro" id="IPR031157">
    <property type="entry name" value="G_TR_CS"/>
</dbReference>
<dbReference type="InterPro" id="IPR027417">
    <property type="entry name" value="P-loop_NTPase"/>
</dbReference>
<dbReference type="InterPro" id="IPR020568">
    <property type="entry name" value="Ribosomal_Su5_D2-typ_SF"/>
</dbReference>
<dbReference type="InterPro" id="IPR014721">
    <property type="entry name" value="Ribsml_uS5_D2-typ_fold_subgr"/>
</dbReference>
<dbReference type="InterPro" id="IPR005225">
    <property type="entry name" value="Small_GTP-bd"/>
</dbReference>
<dbReference type="InterPro" id="IPR000795">
    <property type="entry name" value="T_Tr_GTP-bd_dom"/>
</dbReference>
<dbReference type="InterPro" id="IPR009000">
    <property type="entry name" value="Transl_B-barrel_sf"/>
</dbReference>
<dbReference type="InterPro" id="IPR004540">
    <property type="entry name" value="Transl_elong_EFG/EF2"/>
</dbReference>
<dbReference type="InterPro" id="IPR005517">
    <property type="entry name" value="Transl_elong_EFG/EF2_IV"/>
</dbReference>
<dbReference type="NCBIfam" id="TIGR00484">
    <property type="entry name" value="EF-G"/>
    <property type="match status" value="1"/>
</dbReference>
<dbReference type="NCBIfam" id="NF009381">
    <property type="entry name" value="PRK12740.1-5"/>
    <property type="match status" value="1"/>
</dbReference>
<dbReference type="NCBIfam" id="TIGR00231">
    <property type="entry name" value="small_GTP"/>
    <property type="match status" value="1"/>
</dbReference>
<dbReference type="PANTHER" id="PTHR43261:SF1">
    <property type="entry name" value="RIBOSOME-RELEASING FACTOR 2, MITOCHONDRIAL"/>
    <property type="match status" value="1"/>
</dbReference>
<dbReference type="PANTHER" id="PTHR43261">
    <property type="entry name" value="TRANSLATION ELONGATION FACTOR G-RELATED"/>
    <property type="match status" value="1"/>
</dbReference>
<dbReference type="Pfam" id="PF00679">
    <property type="entry name" value="EFG_C"/>
    <property type="match status" value="1"/>
</dbReference>
<dbReference type="Pfam" id="PF14492">
    <property type="entry name" value="EFG_III"/>
    <property type="match status" value="1"/>
</dbReference>
<dbReference type="Pfam" id="PF03764">
    <property type="entry name" value="EFG_IV"/>
    <property type="match status" value="1"/>
</dbReference>
<dbReference type="Pfam" id="PF00009">
    <property type="entry name" value="GTP_EFTU"/>
    <property type="match status" value="1"/>
</dbReference>
<dbReference type="Pfam" id="PF03144">
    <property type="entry name" value="GTP_EFTU_D2"/>
    <property type="match status" value="1"/>
</dbReference>
<dbReference type="PRINTS" id="PR00315">
    <property type="entry name" value="ELONGATNFCT"/>
</dbReference>
<dbReference type="SMART" id="SM00838">
    <property type="entry name" value="EFG_C"/>
    <property type="match status" value="1"/>
</dbReference>
<dbReference type="SMART" id="SM00889">
    <property type="entry name" value="EFG_IV"/>
    <property type="match status" value="1"/>
</dbReference>
<dbReference type="SUPFAM" id="SSF54980">
    <property type="entry name" value="EF-G C-terminal domain-like"/>
    <property type="match status" value="2"/>
</dbReference>
<dbReference type="SUPFAM" id="SSF52540">
    <property type="entry name" value="P-loop containing nucleoside triphosphate hydrolases"/>
    <property type="match status" value="1"/>
</dbReference>
<dbReference type="SUPFAM" id="SSF54211">
    <property type="entry name" value="Ribosomal protein S5 domain 2-like"/>
    <property type="match status" value="1"/>
</dbReference>
<dbReference type="SUPFAM" id="SSF50447">
    <property type="entry name" value="Translation proteins"/>
    <property type="match status" value="1"/>
</dbReference>
<dbReference type="PROSITE" id="PS00301">
    <property type="entry name" value="G_TR_1"/>
    <property type="match status" value="1"/>
</dbReference>
<dbReference type="PROSITE" id="PS51722">
    <property type="entry name" value="G_TR_2"/>
    <property type="match status" value="1"/>
</dbReference>
<keyword id="KW-0963">Cytoplasm</keyword>
<keyword id="KW-0251">Elongation factor</keyword>
<keyword id="KW-0342">GTP-binding</keyword>
<keyword id="KW-0547">Nucleotide-binding</keyword>
<keyword id="KW-0648">Protein biosynthesis</keyword>
<keyword id="KW-1185">Reference proteome</keyword>
<gene>
    <name evidence="1" type="primary">fusA</name>
    <name type="ordered locus">DIP0469</name>
</gene>
<reference key="1">
    <citation type="journal article" date="2003" name="Nucleic Acids Res.">
        <title>The complete genome sequence and analysis of Corynebacterium diphtheriae NCTC13129.</title>
        <authorList>
            <person name="Cerdeno-Tarraga A.-M."/>
            <person name="Efstratiou A."/>
            <person name="Dover L.G."/>
            <person name="Holden M.T.G."/>
            <person name="Pallen M.J."/>
            <person name="Bentley S.D."/>
            <person name="Besra G.S."/>
            <person name="Churcher C.M."/>
            <person name="James K.D."/>
            <person name="De Zoysa A."/>
            <person name="Chillingworth T."/>
            <person name="Cronin A."/>
            <person name="Dowd L."/>
            <person name="Feltwell T."/>
            <person name="Hamlin N."/>
            <person name="Holroyd S."/>
            <person name="Jagels K."/>
            <person name="Moule S."/>
            <person name="Quail M.A."/>
            <person name="Rabbinowitsch E."/>
            <person name="Rutherford K.M."/>
            <person name="Thomson N.R."/>
            <person name="Unwin L."/>
            <person name="Whitehead S."/>
            <person name="Barrell B.G."/>
            <person name="Parkhill J."/>
        </authorList>
    </citation>
    <scope>NUCLEOTIDE SEQUENCE [LARGE SCALE GENOMIC DNA]</scope>
    <source>
        <strain>ATCC 700971 / NCTC 13129 / Biotype gravis</strain>
    </source>
</reference>
<accession>Q6NJD6</accession>
<name>EFG_CORDI</name>
<comment type="function">
    <text evidence="1">Catalyzes the GTP-dependent ribosomal translocation step during translation elongation. During this step, the ribosome changes from the pre-translocational (PRE) to the post-translocational (POST) state as the newly formed A-site-bound peptidyl-tRNA and P-site-bound deacylated tRNA move to the P and E sites, respectively. Catalyzes the coordinated movement of the two tRNA molecules, the mRNA and conformational changes in the ribosome.</text>
</comment>
<comment type="subcellular location">
    <subcellularLocation>
        <location evidence="1">Cytoplasm</location>
    </subcellularLocation>
</comment>
<comment type="similarity">
    <text evidence="1">Belongs to the TRAFAC class translation factor GTPase superfamily. Classic translation factor GTPase family. EF-G/EF-2 subfamily.</text>
</comment>
<comment type="sequence caution" evidence="2">
    <conflict type="erroneous initiation">
        <sequence resource="EMBL-CDS" id="CAE48973"/>
    </conflict>
</comment>
<protein>
    <recommendedName>
        <fullName evidence="1">Elongation factor G</fullName>
        <shortName evidence="1">EF-G</shortName>
    </recommendedName>
</protein>
<organism>
    <name type="scientific">Corynebacterium diphtheriae (strain ATCC 700971 / NCTC 13129 / Biotype gravis)</name>
    <dbReference type="NCBI Taxonomy" id="257309"/>
    <lineage>
        <taxon>Bacteria</taxon>
        <taxon>Bacillati</taxon>
        <taxon>Actinomycetota</taxon>
        <taxon>Actinomycetes</taxon>
        <taxon>Mycobacteriales</taxon>
        <taxon>Corynebacteriaceae</taxon>
        <taxon>Corynebacterium</taxon>
    </lineage>
</organism>